<protein>
    <recommendedName>
        <fullName>Probable 2,3-bisphosphoglycerate-independent phosphoglycerate mutase 2</fullName>
        <shortName>BPG-independent PGAM 2</shortName>
        <shortName>Phosphoglyceromutase 2</shortName>
        <ecNumber evidence="3">5.4.2.12</ecNumber>
    </recommendedName>
    <alternativeName>
        <fullName>PGAM-I 2</fullName>
    </alternativeName>
</protein>
<sequence>MGSSGDVNWKLADHPKLPKGKTIGLIVLDGWGESDPDQYNCIHKAPTPAMDSLKDGKPDTWRLIKAHGTAVGLPSEDDMGNSEVGHNALGAGRIYAQGAKLVDLALASGKIYEDEGFKYISQSFEKGTVHLIGLLSDGGVHSRLDQVQLLLKGFAERGAKRIRVHILTDGRDVLDGSSVGFVETLEADLAALRAKGVDAQVASGGGRMYVTMDRYENDWSVVKRGWDAQVLGEAPHKFKSALEAVKTLRAEPGANDQYLPSFVIVDDNGKAVGPIVDGDAVVTFNFRADRMVMHAKALEYKDFDKFDRVRVPDIRYAGMLQYDGELKLPSRYLVSPPLIDRTSGEYLAHNGVRTFACSETVKFGHVTFFWNGNRSGYFNEKLEEYVEIPSDSGISFNVQPKMKALEIAEKARDAILSGKFDQVRVNLPNGDMVGHTGDIEATVVACEAADRAVRTILDAIEQVGGIYVVTADHGNAEDMVKRDKSGKPALDKEGNLQILTSHTLKPVPIAIGGPGLSAGVRFRQDIETPGLANVAATVMNLHGFVAPSDYETSLIEVVEK</sequence>
<evidence type="ECO:0000250" key="1"/>
<evidence type="ECO:0000250" key="2">
    <source>
        <dbReference type="UniProtKB" id="Q9X519"/>
    </source>
</evidence>
<evidence type="ECO:0000269" key="3">
    <source>
    </source>
</evidence>
<evidence type="ECO:0000305" key="4"/>
<evidence type="ECO:0000312" key="5">
    <source>
        <dbReference type="Araport" id="AT3G08590"/>
    </source>
</evidence>
<evidence type="ECO:0000312" key="6">
    <source>
        <dbReference type="EMBL" id="AAG51361.1"/>
    </source>
</evidence>
<evidence type="ECO:0007744" key="7">
    <source>
    </source>
</evidence>
<feature type="initiator methionine" description="Removed" evidence="7">
    <location>
        <position position="1"/>
    </location>
</feature>
<feature type="chain" id="PRO_0000212109" description="Probable 2,3-bisphosphoglycerate-independent phosphoglycerate mutase 2">
    <location>
        <begin position="2"/>
        <end position="560"/>
    </location>
</feature>
<feature type="active site" description="Phosphoserine intermediate" evidence="2">
    <location>
        <position position="82"/>
    </location>
</feature>
<feature type="binding site" evidence="2">
    <location>
        <position position="29"/>
    </location>
    <ligand>
        <name>Mn(2+)</name>
        <dbReference type="ChEBI" id="CHEBI:29035"/>
        <label>2</label>
    </ligand>
</feature>
<feature type="binding site" evidence="2">
    <location>
        <position position="82"/>
    </location>
    <ligand>
        <name>Mn(2+)</name>
        <dbReference type="ChEBI" id="CHEBI:29035"/>
        <label>2</label>
    </ligand>
</feature>
<feature type="binding site" evidence="2">
    <location>
        <position position="141"/>
    </location>
    <ligand>
        <name>substrate</name>
    </ligand>
</feature>
<feature type="binding site" evidence="2">
    <location>
        <begin position="171"/>
        <end position="172"/>
    </location>
    <ligand>
        <name>substrate</name>
    </ligand>
</feature>
<feature type="binding site" evidence="2">
    <location>
        <position position="207"/>
    </location>
    <ligand>
        <name>substrate</name>
    </ligand>
</feature>
<feature type="binding site" evidence="2">
    <location>
        <position position="214"/>
    </location>
    <ligand>
        <name>substrate</name>
    </ligand>
</feature>
<feature type="binding site" evidence="2">
    <location>
        <begin position="287"/>
        <end position="290"/>
    </location>
    <ligand>
        <name>substrate</name>
    </ligand>
</feature>
<feature type="binding site" evidence="2">
    <location>
        <position position="362"/>
    </location>
    <ligand>
        <name>substrate</name>
    </ligand>
</feature>
<feature type="binding site" evidence="2">
    <location>
        <position position="431"/>
    </location>
    <ligand>
        <name>Mn(2+)</name>
        <dbReference type="ChEBI" id="CHEBI:29035"/>
        <label>1</label>
    </ligand>
</feature>
<feature type="binding site" evidence="2">
    <location>
        <position position="435"/>
    </location>
    <ligand>
        <name>Mn(2+)</name>
        <dbReference type="ChEBI" id="CHEBI:29035"/>
        <label>1</label>
    </ligand>
</feature>
<feature type="binding site" evidence="2">
    <location>
        <position position="472"/>
    </location>
    <ligand>
        <name>Mn(2+)</name>
        <dbReference type="ChEBI" id="CHEBI:29035"/>
        <label>2</label>
    </ligand>
</feature>
<feature type="binding site" evidence="2">
    <location>
        <position position="473"/>
    </location>
    <ligand>
        <name>Mn(2+)</name>
        <dbReference type="ChEBI" id="CHEBI:29035"/>
        <label>2</label>
    </ligand>
</feature>
<feature type="binding site" evidence="2">
    <location>
        <position position="502"/>
    </location>
    <ligand>
        <name>Mn(2+)</name>
        <dbReference type="ChEBI" id="CHEBI:29035"/>
        <label>1</label>
    </ligand>
</feature>
<feature type="modified residue" description="N-acetylglycine" evidence="7">
    <location>
        <position position="2"/>
    </location>
</feature>
<feature type="sequence conflict" description="In Ref. 5; AAM61601." evidence="4" ref="5">
    <original>A</original>
    <variation>S</variation>
    <location>
        <position position="194"/>
    </location>
</feature>
<feature type="sequence conflict" description="In Ref. 5; AAM61601." evidence="4" ref="5">
    <original>S</original>
    <variation>P</variation>
    <location>
        <position position="261"/>
    </location>
</feature>
<feature type="sequence conflict" description="In Ref. 5; AAM61601." evidence="4" ref="5">
    <original>N</original>
    <variation>S</variation>
    <location>
        <position position="268"/>
    </location>
</feature>
<feature type="sequence conflict" description="In Ref. 5; AAM61601." evidence="4" ref="5">
    <original>R</original>
    <variation>L</variation>
    <location>
        <position position="290"/>
    </location>
</feature>
<feature type="sequence conflict" description="In Ref. 5; AAM61601." evidence="4" ref="5">
    <original>R</original>
    <variation>H</variation>
    <location>
        <position position="331"/>
    </location>
</feature>
<feature type="sequence conflict" description="In Ref. 5; AAM61601." evidence="4" ref="5">
    <original>D</original>
    <variation>N</variation>
    <location>
        <position position="413"/>
    </location>
</feature>
<reference key="1">
    <citation type="journal article" date="2000" name="Nature">
        <title>Sequence and analysis of chromosome 3 of the plant Arabidopsis thaliana.</title>
        <authorList>
            <person name="Salanoubat M."/>
            <person name="Lemcke K."/>
            <person name="Rieger M."/>
            <person name="Ansorge W."/>
            <person name="Unseld M."/>
            <person name="Fartmann B."/>
            <person name="Valle G."/>
            <person name="Bloecker H."/>
            <person name="Perez-Alonso M."/>
            <person name="Obermaier B."/>
            <person name="Delseny M."/>
            <person name="Boutry M."/>
            <person name="Grivell L.A."/>
            <person name="Mache R."/>
            <person name="Puigdomenech P."/>
            <person name="De Simone V."/>
            <person name="Choisne N."/>
            <person name="Artiguenave F."/>
            <person name="Robert C."/>
            <person name="Brottier P."/>
            <person name="Wincker P."/>
            <person name="Cattolico L."/>
            <person name="Weissenbach J."/>
            <person name="Saurin W."/>
            <person name="Quetier F."/>
            <person name="Schaefer M."/>
            <person name="Mueller-Auer S."/>
            <person name="Gabel C."/>
            <person name="Fuchs M."/>
            <person name="Benes V."/>
            <person name="Wurmbach E."/>
            <person name="Drzonek H."/>
            <person name="Erfle H."/>
            <person name="Jordan N."/>
            <person name="Bangert S."/>
            <person name="Wiedelmann R."/>
            <person name="Kranz H."/>
            <person name="Voss H."/>
            <person name="Holland R."/>
            <person name="Brandt P."/>
            <person name="Nyakatura G."/>
            <person name="Vezzi A."/>
            <person name="D'Angelo M."/>
            <person name="Pallavicini A."/>
            <person name="Toppo S."/>
            <person name="Simionati B."/>
            <person name="Conrad A."/>
            <person name="Hornischer K."/>
            <person name="Kauer G."/>
            <person name="Loehnert T.-H."/>
            <person name="Nordsiek G."/>
            <person name="Reichelt J."/>
            <person name="Scharfe M."/>
            <person name="Schoen O."/>
            <person name="Bargues M."/>
            <person name="Terol J."/>
            <person name="Climent J."/>
            <person name="Navarro P."/>
            <person name="Collado C."/>
            <person name="Perez-Perez A."/>
            <person name="Ottenwaelder B."/>
            <person name="Duchemin D."/>
            <person name="Cooke R."/>
            <person name="Laudie M."/>
            <person name="Berger-Llauro C."/>
            <person name="Purnelle B."/>
            <person name="Masuy D."/>
            <person name="de Haan M."/>
            <person name="Maarse A.C."/>
            <person name="Alcaraz J.-P."/>
            <person name="Cottet A."/>
            <person name="Casacuberta E."/>
            <person name="Monfort A."/>
            <person name="Argiriou A."/>
            <person name="Flores M."/>
            <person name="Liguori R."/>
            <person name="Vitale D."/>
            <person name="Mannhaupt G."/>
            <person name="Haase D."/>
            <person name="Schoof H."/>
            <person name="Rudd S."/>
            <person name="Zaccaria P."/>
            <person name="Mewes H.-W."/>
            <person name="Mayer K.F.X."/>
            <person name="Kaul S."/>
            <person name="Town C.D."/>
            <person name="Koo H.L."/>
            <person name="Tallon L.J."/>
            <person name="Jenkins J."/>
            <person name="Rooney T."/>
            <person name="Rizzo M."/>
            <person name="Walts A."/>
            <person name="Utterback T."/>
            <person name="Fujii C.Y."/>
            <person name="Shea T.P."/>
            <person name="Creasy T.H."/>
            <person name="Haas B."/>
            <person name="Maiti R."/>
            <person name="Wu D."/>
            <person name="Peterson J."/>
            <person name="Van Aken S."/>
            <person name="Pai G."/>
            <person name="Militscher J."/>
            <person name="Sellers P."/>
            <person name="Gill J.E."/>
            <person name="Feldblyum T.V."/>
            <person name="Preuss D."/>
            <person name="Lin X."/>
            <person name="Nierman W.C."/>
            <person name="Salzberg S.L."/>
            <person name="White O."/>
            <person name="Venter J.C."/>
            <person name="Fraser C.M."/>
            <person name="Kaneko T."/>
            <person name="Nakamura Y."/>
            <person name="Sato S."/>
            <person name="Kato T."/>
            <person name="Asamizu E."/>
            <person name="Sasamoto S."/>
            <person name="Kimura T."/>
            <person name="Idesawa K."/>
            <person name="Kawashima K."/>
            <person name="Kishida Y."/>
            <person name="Kiyokawa C."/>
            <person name="Kohara M."/>
            <person name="Matsumoto M."/>
            <person name="Matsuno A."/>
            <person name="Muraki A."/>
            <person name="Nakayama S."/>
            <person name="Nakazaki N."/>
            <person name="Shinpo S."/>
            <person name="Takeuchi C."/>
            <person name="Wada T."/>
            <person name="Watanabe A."/>
            <person name="Yamada M."/>
            <person name="Yasuda M."/>
            <person name="Tabata S."/>
        </authorList>
    </citation>
    <scope>NUCLEOTIDE SEQUENCE [LARGE SCALE GENOMIC DNA]</scope>
    <source>
        <strain>cv. Columbia</strain>
    </source>
</reference>
<reference key="2">
    <citation type="journal article" date="2017" name="Plant J.">
        <title>Araport11: a complete reannotation of the Arabidopsis thaliana reference genome.</title>
        <authorList>
            <person name="Cheng C.Y."/>
            <person name="Krishnakumar V."/>
            <person name="Chan A.P."/>
            <person name="Thibaud-Nissen F."/>
            <person name="Schobel S."/>
            <person name="Town C.D."/>
        </authorList>
    </citation>
    <scope>GENOME REANNOTATION</scope>
    <source>
        <strain>cv. Columbia</strain>
    </source>
</reference>
<reference key="3">
    <citation type="journal article" date="2003" name="Science">
        <title>Empirical analysis of transcriptional activity in the Arabidopsis genome.</title>
        <authorList>
            <person name="Yamada K."/>
            <person name="Lim J."/>
            <person name="Dale J.M."/>
            <person name="Chen H."/>
            <person name="Shinn P."/>
            <person name="Palm C.J."/>
            <person name="Southwick A.M."/>
            <person name="Wu H.C."/>
            <person name="Kim C.J."/>
            <person name="Nguyen M."/>
            <person name="Pham P.K."/>
            <person name="Cheuk R.F."/>
            <person name="Karlin-Newmann G."/>
            <person name="Liu S.X."/>
            <person name="Lam B."/>
            <person name="Sakano H."/>
            <person name="Wu T."/>
            <person name="Yu G."/>
            <person name="Miranda M."/>
            <person name="Quach H.L."/>
            <person name="Tripp M."/>
            <person name="Chang C.H."/>
            <person name="Lee J.M."/>
            <person name="Toriumi M.J."/>
            <person name="Chan M.M."/>
            <person name="Tang C.C."/>
            <person name="Onodera C.S."/>
            <person name="Deng J.M."/>
            <person name="Akiyama K."/>
            <person name="Ansari Y."/>
            <person name="Arakawa T."/>
            <person name="Banh J."/>
            <person name="Banno F."/>
            <person name="Bowser L."/>
            <person name="Brooks S.Y."/>
            <person name="Carninci P."/>
            <person name="Chao Q."/>
            <person name="Choy N."/>
            <person name="Enju A."/>
            <person name="Goldsmith A.D."/>
            <person name="Gurjal M."/>
            <person name="Hansen N.F."/>
            <person name="Hayashizaki Y."/>
            <person name="Johnson-Hopson C."/>
            <person name="Hsuan V.W."/>
            <person name="Iida K."/>
            <person name="Karnes M."/>
            <person name="Khan S."/>
            <person name="Koesema E."/>
            <person name="Ishida J."/>
            <person name="Jiang P.X."/>
            <person name="Jones T."/>
            <person name="Kawai J."/>
            <person name="Kamiya A."/>
            <person name="Meyers C."/>
            <person name="Nakajima M."/>
            <person name="Narusaka M."/>
            <person name="Seki M."/>
            <person name="Sakurai T."/>
            <person name="Satou M."/>
            <person name="Tamse R."/>
            <person name="Vaysberg M."/>
            <person name="Wallender E.K."/>
            <person name="Wong C."/>
            <person name="Yamamura Y."/>
            <person name="Yuan S."/>
            <person name="Shinozaki K."/>
            <person name="Davis R.W."/>
            <person name="Theologis A."/>
            <person name="Ecker J.R."/>
        </authorList>
    </citation>
    <scope>NUCLEOTIDE SEQUENCE [LARGE SCALE MRNA]</scope>
    <source>
        <strain>cv. Columbia</strain>
    </source>
</reference>
<reference key="4">
    <citation type="journal article" date="2009" name="DNA Res.">
        <title>Analysis of multiple occurrences of alternative splicing events in Arabidopsis thaliana using novel sequenced full-length cDNAs.</title>
        <authorList>
            <person name="Iida K."/>
            <person name="Fukami-Kobayashi K."/>
            <person name="Toyoda A."/>
            <person name="Sakaki Y."/>
            <person name="Kobayashi M."/>
            <person name="Seki M."/>
            <person name="Shinozaki K."/>
        </authorList>
    </citation>
    <scope>NUCLEOTIDE SEQUENCE [LARGE SCALE MRNA]</scope>
    <source>
        <strain>cv. Columbia</strain>
    </source>
</reference>
<reference key="5">
    <citation type="submission" date="2002-03" db="EMBL/GenBank/DDBJ databases">
        <title>Full-length cDNA from Arabidopsis thaliana.</title>
        <authorList>
            <person name="Brover V.V."/>
            <person name="Troukhan M.E."/>
            <person name="Alexandrov N.A."/>
            <person name="Lu Y.-P."/>
            <person name="Flavell R.B."/>
            <person name="Feldmann K.A."/>
        </authorList>
    </citation>
    <scope>NUCLEOTIDE SEQUENCE [LARGE SCALE MRNA]</scope>
</reference>
<reference key="6">
    <citation type="journal article" date="2011" name="J. Exp. Bot.">
        <title>The glycolytic enzyme, phosphoglycerate mutase, has critical roles in stomatal movement, vegetative growth, and pollen production in Arabidopsis thaliana.</title>
        <authorList>
            <person name="Zhao Z."/>
            <person name="Assmann S.M."/>
        </authorList>
    </citation>
    <scope>FUNCTION</scope>
    <scope>DISRUPTION PHENOTYPE</scope>
    <scope>CATALYTIC ACTIVITY</scope>
    <source>
        <strain>cv. Columbia</strain>
    </source>
</reference>
<reference key="7">
    <citation type="journal article" date="2012" name="Mol. Cell. Proteomics">
        <title>Comparative large-scale characterisation of plant vs. mammal proteins reveals similar and idiosyncratic N-alpha acetylation features.</title>
        <authorList>
            <person name="Bienvenut W.V."/>
            <person name="Sumpton D."/>
            <person name="Martinez A."/>
            <person name="Lilla S."/>
            <person name="Espagne C."/>
            <person name="Meinnel T."/>
            <person name="Giglione C."/>
        </authorList>
    </citation>
    <scope>ACETYLATION [LARGE SCALE ANALYSIS] AT GLY-2</scope>
    <scope>CLEAVAGE OF INITIATOR METHIONINE [LARGE SCALE ANALYSIS]</scope>
    <scope>IDENTIFICATION BY MASS SPECTROMETRY [LARGE SCALE ANALYSIS]</scope>
</reference>
<accession>Q9M9K1</accession>
<accession>A0A178VFA2</accession>
<accession>B9DFU6</accession>
<accession>Q8LF55</accession>
<proteinExistence type="evidence at protein level"/>
<dbReference type="EC" id="5.4.2.12" evidence="3"/>
<dbReference type="EMBL" id="AC012562">
    <property type="protein sequence ID" value="AAG51361.1"/>
    <property type="molecule type" value="Genomic_DNA"/>
</dbReference>
<dbReference type="EMBL" id="CP002686">
    <property type="protein sequence ID" value="AEE74650.1"/>
    <property type="molecule type" value="Genomic_DNA"/>
</dbReference>
<dbReference type="EMBL" id="CP002686">
    <property type="protein sequence ID" value="AEE74651.1"/>
    <property type="molecule type" value="Genomic_DNA"/>
</dbReference>
<dbReference type="EMBL" id="AY039969">
    <property type="protein sequence ID" value="AAK64146.1"/>
    <property type="molecule type" value="mRNA"/>
</dbReference>
<dbReference type="EMBL" id="AF424615">
    <property type="protein sequence ID" value="AAL11608.1"/>
    <property type="molecule type" value="mRNA"/>
</dbReference>
<dbReference type="EMBL" id="AY113910">
    <property type="protein sequence ID" value="AAM44958.1"/>
    <property type="molecule type" value="mRNA"/>
</dbReference>
<dbReference type="EMBL" id="AK316907">
    <property type="protein sequence ID" value="BAH19613.1"/>
    <property type="molecule type" value="mRNA"/>
</dbReference>
<dbReference type="EMBL" id="AY085044">
    <property type="protein sequence ID" value="AAM61601.1"/>
    <property type="molecule type" value="mRNA"/>
</dbReference>
<dbReference type="SMR" id="Q9M9K1"/>
<dbReference type="BioGRID" id="5341">
    <property type="interactions" value="25"/>
</dbReference>
<dbReference type="FunCoup" id="Q9M9K1">
    <property type="interactions" value="888"/>
</dbReference>
<dbReference type="STRING" id="3702.Q9M9K1"/>
<dbReference type="iPTMnet" id="Q9M9K1"/>
<dbReference type="PaxDb" id="3702-AT3G08590.2"/>
<dbReference type="ProteomicsDB" id="234979"/>
<dbReference type="EnsemblPlants" id="AT3G08590.1">
    <property type="protein sequence ID" value="AT3G08590.1"/>
    <property type="gene ID" value="AT3G08590"/>
</dbReference>
<dbReference type="EnsemblPlants" id="AT3G08590.2">
    <property type="protein sequence ID" value="AT3G08590.2"/>
    <property type="gene ID" value="AT3G08590"/>
</dbReference>
<dbReference type="Gramene" id="AT3G08590.1">
    <property type="protein sequence ID" value="AT3G08590.1"/>
    <property type="gene ID" value="AT3G08590"/>
</dbReference>
<dbReference type="Gramene" id="AT3G08590.2">
    <property type="protein sequence ID" value="AT3G08590.2"/>
    <property type="gene ID" value="AT3G08590"/>
</dbReference>
<dbReference type="KEGG" id="ath:AT3G08590"/>
<dbReference type="Araport" id="AT3G08590"/>
<dbReference type="TAIR" id="AT3G08590">
    <property type="gene designation" value="IPGAM2"/>
</dbReference>
<dbReference type="eggNOG" id="KOG4513">
    <property type="taxonomic scope" value="Eukaryota"/>
</dbReference>
<dbReference type="HOGENOM" id="CLU_026099_3_1_1"/>
<dbReference type="InParanoid" id="Q9M9K1"/>
<dbReference type="OMA" id="FMDGRDT"/>
<dbReference type="OrthoDB" id="952271at2759"/>
<dbReference type="PhylomeDB" id="Q9M9K1"/>
<dbReference type="BioCyc" id="ARA:AT3G08590-MONOMER"/>
<dbReference type="BRENDA" id="5.4.2.12">
    <property type="organism ID" value="399"/>
</dbReference>
<dbReference type="UniPathway" id="UPA00109">
    <property type="reaction ID" value="UER00186"/>
</dbReference>
<dbReference type="CD-CODE" id="4299E36E">
    <property type="entry name" value="Nucleolus"/>
</dbReference>
<dbReference type="PRO" id="PR:Q9M9K1"/>
<dbReference type="Proteomes" id="UP000006548">
    <property type="component" value="Chromosome 3"/>
</dbReference>
<dbReference type="ExpressionAtlas" id="Q9M9K1">
    <property type="expression patterns" value="baseline and differential"/>
</dbReference>
<dbReference type="GO" id="GO:0048046">
    <property type="term" value="C:apoplast"/>
    <property type="evidence" value="ECO:0007005"/>
    <property type="project" value="TAIR"/>
</dbReference>
<dbReference type="GO" id="GO:0005829">
    <property type="term" value="C:cytosol"/>
    <property type="evidence" value="ECO:0007005"/>
    <property type="project" value="TAIR"/>
</dbReference>
<dbReference type="GO" id="GO:0009506">
    <property type="term" value="C:plasmodesma"/>
    <property type="evidence" value="ECO:0007005"/>
    <property type="project" value="TAIR"/>
</dbReference>
<dbReference type="GO" id="GO:0030145">
    <property type="term" value="F:manganese ion binding"/>
    <property type="evidence" value="ECO:0007669"/>
    <property type="project" value="InterPro"/>
</dbReference>
<dbReference type="GO" id="GO:0004619">
    <property type="term" value="F:phosphoglycerate mutase activity"/>
    <property type="evidence" value="ECO:0000316"/>
    <property type="project" value="UniProtKB"/>
</dbReference>
<dbReference type="GO" id="GO:0006007">
    <property type="term" value="P:glucose catabolic process"/>
    <property type="evidence" value="ECO:0007669"/>
    <property type="project" value="InterPro"/>
</dbReference>
<dbReference type="GO" id="GO:0006096">
    <property type="term" value="P:glycolytic process"/>
    <property type="evidence" value="ECO:0007669"/>
    <property type="project" value="UniProtKB-UniPathway"/>
</dbReference>
<dbReference type="GO" id="GO:0009555">
    <property type="term" value="P:pollen development"/>
    <property type="evidence" value="ECO:0000316"/>
    <property type="project" value="UniProtKB"/>
</dbReference>
<dbReference type="GO" id="GO:0009737">
    <property type="term" value="P:response to abscisic acid"/>
    <property type="evidence" value="ECO:0000316"/>
    <property type="project" value="UniProtKB"/>
</dbReference>
<dbReference type="GO" id="GO:0009637">
    <property type="term" value="P:response to blue light"/>
    <property type="evidence" value="ECO:0000316"/>
    <property type="project" value="UniProtKB"/>
</dbReference>
<dbReference type="GO" id="GO:0010037">
    <property type="term" value="P:response to carbon dioxide"/>
    <property type="evidence" value="ECO:0000316"/>
    <property type="project" value="UniProtKB"/>
</dbReference>
<dbReference type="GO" id="GO:0010118">
    <property type="term" value="P:stomatal movement"/>
    <property type="evidence" value="ECO:0000316"/>
    <property type="project" value="UniProtKB"/>
</dbReference>
<dbReference type="CDD" id="cd16010">
    <property type="entry name" value="iPGM"/>
    <property type="match status" value="1"/>
</dbReference>
<dbReference type="FunFam" id="3.40.1450.10:FF:000002">
    <property type="entry name" value="2,3-bisphosphoglycerate-independent phosphoglycerate mutase"/>
    <property type="match status" value="1"/>
</dbReference>
<dbReference type="Gene3D" id="3.40.720.10">
    <property type="entry name" value="Alkaline Phosphatase, subunit A"/>
    <property type="match status" value="1"/>
</dbReference>
<dbReference type="Gene3D" id="3.40.1450.10">
    <property type="entry name" value="BPG-independent phosphoglycerate mutase, domain B"/>
    <property type="match status" value="1"/>
</dbReference>
<dbReference type="InterPro" id="IPR017850">
    <property type="entry name" value="Alkaline_phosphatase_core_sf"/>
</dbReference>
<dbReference type="InterPro" id="IPR011258">
    <property type="entry name" value="BPG-indep_PGM_N"/>
</dbReference>
<dbReference type="InterPro" id="IPR006124">
    <property type="entry name" value="Metalloenzyme"/>
</dbReference>
<dbReference type="InterPro" id="IPR036646">
    <property type="entry name" value="PGAM_B_sf"/>
</dbReference>
<dbReference type="InterPro" id="IPR005995">
    <property type="entry name" value="Pgm_bpd_ind"/>
</dbReference>
<dbReference type="NCBIfam" id="TIGR01307">
    <property type="entry name" value="pgm_bpd_ind"/>
    <property type="match status" value="1"/>
</dbReference>
<dbReference type="PANTHER" id="PTHR31637">
    <property type="entry name" value="2,3-BISPHOSPHOGLYCERATE-INDEPENDENT PHOSPHOGLYCERATE MUTASE"/>
    <property type="match status" value="1"/>
</dbReference>
<dbReference type="PANTHER" id="PTHR31637:SF13">
    <property type="entry name" value="2,3-BISPHOSPHOGLYCERATE-INDEPENDENT PHOSPHOGLYCERATE MUTASE 2-RELATED"/>
    <property type="match status" value="1"/>
</dbReference>
<dbReference type="Pfam" id="PF06415">
    <property type="entry name" value="iPGM_N"/>
    <property type="match status" value="1"/>
</dbReference>
<dbReference type="Pfam" id="PF01676">
    <property type="entry name" value="Metalloenzyme"/>
    <property type="match status" value="1"/>
</dbReference>
<dbReference type="PIRSF" id="PIRSF001492">
    <property type="entry name" value="IPGAM"/>
    <property type="match status" value="1"/>
</dbReference>
<dbReference type="SUPFAM" id="SSF64158">
    <property type="entry name" value="2,3-Bisphosphoglycerate-independent phosphoglycerate mutase, substrate-binding domain"/>
    <property type="match status" value="1"/>
</dbReference>
<dbReference type="SUPFAM" id="SSF53649">
    <property type="entry name" value="Alkaline phosphatase-like"/>
    <property type="match status" value="1"/>
</dbReference>
<name>PMG2_ARATH</name>
<organism>
    <name type="scientific">Arabidopsis thaliana</name>
    <name type="common">Mouse-ear cress</name>
    <dbReference type="NCBI Taxonomy" id="3702"/>
    <lineage>
        <taxon>Eukaryota</taxon>
        <taxon>Viridiplantae</taxon>
        <taxon>Streptophyta</taxon>
        <taxon>Embryophyta</taxon>
        <taxon>Tracheophyta</taxon>
        <taxon>Spermatophyta</taxon>
        <taxon>Magnoliopsida</taxon>
        <taxon>eudicotyledons</taxon>
        <taxon>Gunneridae</taxon>
        <taxon>Pentapetalae</taxon>
        <taxon>rosids</taxon>
        <taxon>malvids</taxon>
        <taxon>Brassicales</taxon>
        <taxon>Brassicaceae</taxon>
        <taxon>Camelineae</taxon>
        <taxon>Arabidopsis</taxon>
    </lineage>
</organism>
<gene>
    <name type="primary">PGM2</name>
    <name evidence="5" type="ordered locus">At3g08590</name>
    <name evidence="6" type="ORF">F17O14.6</name>
</gene>
<keyword id="KW-0007">Acetylation</keyword>
<keyword id="KW-0963">Cytoplasm</keyword>
<keyword id="KW-0324">Glycolysis</keyword>
<keyword id="KW-0413">Isomerase</keyword>
<keyword id="KW-0464">Manganese</keyword>
<keyword id="KW-0479">Metal-binding</keyword>
<keyword id="KW-1185">Reference proteome</keyword>
<comment type="function">
    <text evidence="3">Catalyzes the interconversion of 2-phosphoglycerate (2-PGA) and 3-phosphoglycerate (3-PGA) (PubMed:21813794). Required for guard cell function (e.g. blue light-, abscisic acid- (ABA), and low CO(2)-regulated stomatal movements) and fertility (e.g. pollen grains production) (PubMed:21813794).</text>
</comment>
<comment type="catalytic activity">
    <reaction evidence="3">
        <text>(2R)-2-phosphoglycerate = (2R)-3-phosphoglycerate</text>
        <dbReference type="Rhea" id="RHEA:15901"/>
        <dbReference type="ChEBI" id="CHEBI:58272"/>
        <dbReference type="ChEBI" id="CHEBI:58289"/>
        <dbReference type="EC" id="5.4.2.12"/>
    </reaction>
</comment>
<comment type="cofactor">
    <cofactor evidence="2">
        <name>Mn(2+)</name>
        <dbReference type="ChEBI" id="CHEBI:29035"/>
    </cofactor>
    <text evidence="2">Binds 2 manganese ions per subunit.</text>
</comment>
<comment type="pathway">
    <text evidence="2">Carbohydrate degradation; glycolysis; pyruvate from D-glyceraldehyde 3-phosphate: step 3/5.</text>
</comment>
<comment type="subunit">
    <text evidence="2">Monomer.</text>
</comment>
<comment type="subcellular location">
    <subcellularLocation>
        <location evidence="1">Cytoplasm</location>
    </subcellularLocation>
</comment>
<comment type="disruption phenotype">
    <text evidence="3">No visible phenotype (PubMed:21813794). Plants missing both PGM1 and PGM2 have no detectable phosphoglycerate mutase activity and show defects in blue light-, abscisic acid- (ABA), and low CO(2)-regulated stomatal movements (PubMed:21813794). The double mutant ipgam1 ipgam2 exhibits a severely impaired vegetative growth with pale reticulate leaves and don't produce pollen (PubMed:21813794).</text>
</comment>
<comment type="similarity">
    <text evidence="4">Belongs to the BPG-independent phosphoglycerate mutase family.</text>
</comment>